<feature type="chain" id="PRO_0000157746" description="Probable GTP-binding protein EngB">
    <location>
        <begin position="1"/>
        <end position="197"/>
    </location>
</feature>
<feature type="domain" description="EngB-type G" evidence="1">
    <location>
        <begin position="22"/>
        <end position="195"/>
    </location>
</feature>
<feature type="binding site" evidence="1">
    <location>
        <begin position="30"/>
        <end position="37"/>
    </location>
    <ligand>
        <name>GTP</name>
        <dbReference type="ChEBI" id="CHEBI:37565"/>
    </ligand>
</feature>
<feature type="binding site" evidence="1">
    <location>
        <position position="37"/>
    </location>
    <ligand>
        <name>Mg(2+)</name>
        <dbReference type="ChEBI" id="CHEBI:18420"/>
    </ligand>
</feature>
<feature type="binding site" evidence="1">
    <location>
        <begin position="57"/>
        <end position="61"/>
    </location>
    <ligand>
        <name>GTP</name>
        <dbReference type="ChEBI" id="CHEBI:37565"/>
    </ligand>
</feature>
<feature type="binding site" evidence="1">
    <location>
        <position position="59"/>
    </location>
    <ligand>
        <name>Mg(2+)</name>
        <dbReference type="ChEBI" id="CHEBI:18420"/>
    </ligand>
</feature>
<feature type="binding site" evidence="1">
    <location>
        <begin position="75"/>
        <end position="78"/>
    </location>
    <ligand>
        <name>GTP</name>
        <dbReference type="ChEBI" id="CHEBI:37565"/>
    </ligand>
</feature>
<feature type="binding site" evidence="1">
    <location>
        <begin position="142"/>
        <end position="145"/>
    </location>
    <ligand>
        <name>GTP</name>
        <dbReference type="ChEBI" id="CHEBI:37565"/>
    </ligand>
</feature>
<feature type="binding site" evidence="1">
    <location>
        <begin position="174"/>
        <end position="176"/>
    </location>
    <ligand>
        <name>GTP</name>
        <dbReference type="ChEBI" id="CHEBI:37565"/>
    </ligand>
</feature>
<accession>Q8XKK5</accession>
<proteinExistence type="inferred from homology"/>
<reference key="1">
    <citation type="journal article" date="2002" name="Proc. Natl. Acad. Sci. U.S.A.">
        <title>Complete genome sequence of Clostridium perfringens, an anaerobic flesh-eater.</title>
        <authorList>
            <person name="Shimizu T."/>
            <person name="Ohtani K."/>
            <person name="Hirakawa H."/>
            <person name="Ohshima K."/>
            <person name="Yamashita A."/>
            <person name="Shiba T."/>
            <person name="Ogasawara N."/>
            <person name="Hattori M."/>
            <person name="Kuhara S."/>
            <person name="Hayashi H."/>
        </authorList>
    </citation>
    <scope>NUCLEOTIDE SEQUENCE [LARGE SCALE GENOMIC DNA]</scope>
    <source>
        <strain>13 / Type A</strain>
    </source>
</reference>
<gene>
    <name evidence="1" type="primary">engB</name>
    <name type="ordered locus">CPE1389</name>
</gene>
<sequence length="197" mass="22475">MKIKSSEFIISAVKREQYPDDNLPEIAFVGRSNVGKSSIINSLTNRRGLAKVSQTPGKTRLINFFLLNKDFYLVDLPGYGYAKVSKKEKASWGATIERYLLNRGPLKKVVLLVDCRHKPTADDVQMYEWIKHYGYEVVVIATKSDKISNNQIGKSEKLIKETLGLPKDHKLKFFSSLNKKGKDELVDYLFDDLVEEV</sequence>
<protein>
    <recommendedName>
        <fullName evidence="1">Probable GTP-binding protein EngB</fullName>
    </recommendedName>
</protein>
<organism>
    <name type="scientific">Clostridium perfringens (strain 13 / Type A)</name>
    <dbReference type="NCBI Taxonomy" id="195102"/>
    <lineage>
        <taxon>Bacteria</taxon>
        <taxon>Bacillati</taxon>
        <taxon>Bacillota</taxon>
        <taxon>Clostridia</taxon>
        <taxon>Eubacteriales</taxon>
        <taxon>Clostridiaceae</taxon>
        <taxon>Clostridium</taxon>
    </lineage>
</organism>
<dbReference type="EMBL" id="BA000016">
    <property type="protein sequence ID" value="BAB81095.1"/>
    <property type="molecule type" value="Genomic_DNA"/>
</dbReference>
<dbReference type="SMR" id="Q8XKK5"/>
<dbReference type="STRING" id="195102.gene:10490653"/>
<dbReference type="KEGG" id="cpe:CPE1389"/>
<dbReference type="HOGENOM" id="CLU_033732_3_0_9"/>
<dbReference type="Proteomes" id="UP000000818">
    <property type="component" value="Chromosome"/>
</dbReference>
<dbReference type="GO" id="GO:0005829">
    <property type="term" value="C:cytosol"/>
    <property type="evidence" value="ECO:0007669"/>
    <property type="project" value="TreeGrafter"/>
</dbReference>
<dbReference type="GO" id="GO:0005525">
    <property type="term" value="F:GTP binding"/>
    <property type="evidence" value="ECO:0007669"/>
    <property type="project" value="UniProtKB-UniRule"/>
</dbReference>
<dbReference type="GO" id="GO:0046872">
    <property type="term" value="F:metal ion binding"/>
    <property type="evidence" value="ECO:0007669"/>
    <property type="project" value="UniProtKB-KW"/>
</dbReference>
<dbReference type="GO" id="GO:0000917">
    <property type="term" value="P:division septum assembly"/>
    <property type="evidence" value="ECO:0007669"/>
    <property type="project" value="UniProtKB-KW"/>
</dbReference>
<dbReference type="CDD" id="cd01876">
    <property type="entry name" value="YihA_EngB"/>
    <property type="match status" value="1"/>
</dbReference>
<dbReference type="FunFam" id="3.40.50.300:FF:000098">
    <property type="entry name" value="Probable GTP-binding protein EngB"/>
    <property type="match status" value="1"/>
</dbReference>
<dbReference type="Gene3D" id="3.40.50.300">
    <property type="entry name" value="P-loop containing nucleotide triphosphate hydrolases"/>
    <property type="match status" value="1"/>
</dbReference>
<dbReference type="HAMAP" id="MF_00321">
    <property type="entry name" value="GTPase_EngB"/>
    <property type="match status" value="1"/>
</dbReference>
<dbReference type="InterPro" id="IPR030393">
    <property type="entry name" value="G_ENGB_dom"/>
</dbReference>
<dbReference type="InterPro" id="IPR006073">
    <property type="entry name" value="GTP-bd"/>
</dbReference>
<dbReference type="InterPro" id="IPR019987">
    <property type="entry name" value="GTP-bd_ribosome_bio_YsxC"/>
</dbReference>
<dbReference type="InterPro" id="IPR027417">
    <property type="entry name" value="P-loop_NTPase"/>
</dbReference>
<dbReference type="NCBIfam" id="TIGR03598">
    <property type="entry name" value="GTPase_YsxC"/>
    <property type="match status" value="1"/>
</dbReference>
<dbReference type="PANTHER" id="PTHR11649:SF13">
    <property type="entry name" value="ENGB-TYPE G DOMAIN-CONTAINING PROTEIN"/>
    <property type="match status" value="1"/>
</dbReference>
<dbReference type="PANTHER" id="PTHR11649">
    <property type="entry name" value="MSS1/TRME-RELATED GTP-BINDING PROTEIN"/>
    <property type="match status" value="1"/>
</dbReference>
<dbReference type="Pfam" id="PF01926">
    <property type="entry name" value="MMR_HSR1"/>
    <property type="match status" value="1"/>
</dbReference>
<dbReference type="SUPFAM" id="SSF52540">
    <property type="entry name" value="P-loop containing nucleoside triphosphate hydrolases"/>
    <property type="match status" value="1"/>
</dbReference>
<dbReference type="PROSITE" id="PS51706">
    <property type="entry name" value="G_ENGB"/>
    <property type="match status" value="1"/>
</dbReference>
<name>ENGB_CLOPE</name>
<keyword id="KW-0131">Cell cycle</keyword>
<keyword id="KW-0132">Cell division</keyword>
<keyword id="KW-0342">GTP-binding</keyword>
<keyword id="KW-0460">Magnesium</keyword>
<keyword id="KW-0479">Metal-binding</keyword>
<keyword id="KW-0547">Nucleotide-binding</keyword>
<keyword id="KW-1185">Reference proteome</keyword>
<keyword id="KW-0717">Septation</keyword>
<evidence type="ECO:0000255" key="1">
    <source>
        <dbReference type="HAMAP-Rule" id="MF_00321"/>
    </source>
</evidence>
<comment type="function">
    <text evidence="1">Necessary for normal cell division and for the maintenance of normal septation.</text>
</comment>
<comment type="cofactor">
    <cofactor evidence="1">
        <name>Mg(2+)</name>
        <dbReference type="ChEBI" id="CHEBI:18420"/>
    </cofactor>
</comment>
<comment type="similarity">
    <text evidence="1">Belongs to the TRAFAC class TrmE-Era-EngA-EngB-Septin-like GTPase superfamily. EngB GTPase family.</text>
</comment>